<dbReference type="EMBL" id="X15648">
    <property type="status" value="NOT_ANNOTATED_CDS"/>
    <property type="molecule type" value="Genomic_DNA"/>
</dbReference>
<dbReference type="PIR" id="JQ0306">
    <property type="entry name" value="JQ0306"/>
</dbReference>
<dbReference type="GO" id="GO:0005739">
    <property type="term" value="C:mitochondrion"/>
    <property type="evidence" value="ECO:0007669"/>
    <property type="project" value="UniProtKB-SubCell"/>
</dbReference>
<comment type="subcellular location">
    <subcellularLocation>
        <location evidence="1">Mitochondrion</location>
    </subcellularLocation>
</comment>
<organism>
    <name type="scientific">Claviceps purpurea</name>
    <name type="common">Ergot fungus</name>
    <name type="synonym">Sphacelia segetum</name>
    <dbReference type="NCBI Taxonomy" id="5111"/>
    <lineage>
        <taxon>Eukaryota</taxon>
        <taxon>Fungi</taxon>
        <taxon>Dikarya</taxon>
        <taxon>Ascomycota</taxon>
        <taxon>Pezizomycotina</taxon>
        <taxon>Sordariomycetes</taxon>
        <taxon>Hypocreomycetidae</taxon>
        <taxon>Hypocreales</taxon>
        <taxon>Clavicipitaceae</taxon>
        <taxon>Claviceps</taxon>
    </lineage>
</organism>
<sequence>RVLKLPFILVQVPSPLDLSIRCNSSEAVLLKILLWNSPSFTSSITMYSLPLFTSIKTTLVSQNSYFNFFLGLAIKSCSLNFCLNSNNLGLSVINPFSLSTWVL</sequence>
<protein>
    <recommendedName>
        <fullName>Uncharacterized 11.4 kDa protein</fullName>
    </recommendedName>
    <alternativeName>
        <fullName>ORF6</fullName>
    </alternativeName>
</protein>
<name>YPC6_CLAPU</name>
<evidence type="ECO:0000305" key="1"/>
<accession>P22368</accession>
<reference key="1">
    <citation type="journal article" date="1989" name="Mol. Gen. Genet.">
        <title>The linear mitochondrial plasmid pClK1 of the phytopathogenic fungus Claviceps purpurea may code for a DNA polymerase and an RNA polymerase.</title>
        <authorList>
            <person name="Oeser B."/>
            <person name="Tudzynski P."/>
        </authorList>
    </citation>
    <scope>NUCLEOTIDE SEQUENCE [GENOMIC DNA]</scope>
    <source>
        <strain>K</strain>
    </source>
</reference>
<proteinExistence type="predicted"/>
<feature type="chain" id="PRO_0000196892" description="Uncharacterized 11.4 kDa protein">
    <location>
        <begin position="1"/>
        <end position="103"/>
    </location>
</feature>
<keyword id="KW-0496">Mitochondrion</keyword>
<keyword id="KW-0614">Plasmid</keyword>
<geneLocation type="mitochondrion"/>
<geneLocation type="plasmid">
    <name>pClK1</name>
</geneLocation>